<reference key="1">
    <citation type="journal article" date="2006" name="PLoS Biol.">
        <title>Metabolic complementarity and genomics of the dual bacterial symbiosis of sharpshooters.</title>
        <authorList>
            <person name="Wu D."/>
            <person name="Daugherty S.C."/>
            <person name="Van Aken S.E."/>
            <person name="Pai G.H."/>
            <person name="Watkins K.L."/>
            <person name="Khouri H."/>
            <person name="Tallon L.J."/>
            <person name="Zaborsky J.M."/>
            <person name="Dunbar H.E."/>
            <person name="Tran P.L."/>
            <person name="Moran N.A."/>
            <person name="Eisen J.A."/>
        </authorList>
    </citation>
    <scope>NUCLEOTIDE SEQUENCE [LARGE SCALE GENOMIC DNA]</scope>
</reference>
<name>GPMA_BAUCH</name>
<sequence>MTLNKLVLIRHGESKWNNENRFTGWTDIDLSDQGRIEAKNAGQLLKQAGFIFDFAYTSVLKRAIHTLWYILDELDQAWLPVEKSWRLNERHYGALQGLNKKKITVEYGEEQVQQWRRSLNITPPELSDNDKRLPIYDIRYAKLSLDQLPKAESLAMTINRIIPYWKGEILPRINNGERVIIAAHGNSIRAIITLLDQLSENELIQLNIPTGVPIIYEFNSQIKTIKHYYLSIVNKDY</sequence>
<accession>Q1LTL3</accession>
<feature type="chain" id="PRO_1000064031" description="2,3-bisphosphoglycerate-dependent phosphoglycerate mutase">
    <location>
        <begin position="1"/>
        <end position="237"/>
    </location>
</feature>
<feature type="active site" description="Tele-phosphohistidine intermediate" evidence="1">
    <location>
        <position position="11"/>
    </location>
</feature>
<feature type="active site" description="Proton donor/acceptor" evidence="1">
    <location>
        <position position="89"/>
    </location>
</feature>
<feature type="binding site" evidence="1">
    <location>
        <begin position="10"/>
        <end position="17"/>
    </location>
    <ligand>
        <name>substrate</name>
    </ligand>
</feature>
<feature type="binding site" evidence="1">
    <location>
        <begin position="23"/>
        <end position="24"/>
    </location>
    <ligand>
        <name>substrate</name>
    </ligand>
</feature>
<feature type="binding site" evidence="1">
    <location>
        <position position="62"/>
    </location>
    <ligand>
        <name>substrate</name>
    </ligand>
</feature>
<feature type="binding site" evidence="1">
    <location>
        <begin position="89"/>
        <end position="92"/>
    </location>
    <ligand>
        <name>substrate</name>
    </ligand>
</feature>
<feature type="binding site" evidence="1">
    <location>
        <position position="100"/>
    </location>
    <ligand>
        <name>substrate</name>
    </ligand>
</feature>
<feature type="binding site" evidence="1">
    <location>
        <begin position="116"/>
        <end position="117"/>
    </location>
    <ligand>
        <name>substrate</name>
    </ligand>
</feature>
<feature type="binding site" evidence="1">
    <location>
        <begin position="185"/>
        <end position="186"/>
    </location>
    <ligand>
        <name>substrate</name>
    </ligand>
</feature>
<feature type="site" description="Transition state stabilizer" evidence="1">
    <location>
        <position position="184"/>
    </location>
</feature>
<comment type="function">
    <text evidence="1">Catalyzes the interconversion of 2-phosphoglycerate and 3-phosphoglycerate.</text>
</comment>
<comment type="catalytic activity">
    <reaction evidence="1">
        <text>(2R)-2-phosphoglycerate = (2R)-3-phosphoglycerate</text>
        <dbReference type="Rhea" id="RHEA:15901"/>
        <dbReference type="ChEBI" id="CHEBI:58272"/>
        <dbReference type="ChEBI" id="CHEBI:58289"/>
        <dbReference type="EC" id="5.4.2.11"/>
    </reaction>
</comment>
<comment type="pathway">
    <text evidence="1">Carbohydrate degradation; glycolysis; pyruvate from D-glyceraldehyde 3-phosphate: step 3/5.</text>
</comment>
<comment type="subunit">
    <text evidence="1">Homodimer.</text>
</comment>
<comment type="similarity">
    <text evidence="1">Belongs to the phosphoglycerate mutase family. BPG-dependent PGAM subfamily.</text>
</comment>
<dbReference type="EC" id="5.4.2.11" evidence="1"/>
<dbReference type="EMBL" id="CP000238">
    <property type="protein sequence ID" value="ABF13818.1"/>
    <property type="molecule type" value="Genomic_DNA"/>
</dbReference>
<dbReference type="RefSeq" id="WP_011520434.1">
    <property type="nucleotide sequence ID" value="NC_007984.1"/>
</dbReference>
<dbReference type="SMR" id="Q1LTL3"/>
<dbReference type="STRING" id="374463.BCI_0251"/>
<dbReference type="KEGG" id="bci:BCI_0251"/>
<dbReference type="HOGENOM" id="CLU_033323_1_1_6"/>
<dbReference type="OrthoDB" id="9781415at2"/>
<dbReference type="UniPathway" id="UPA00109">
    <property type="reaction ID" value="UER00186"/>
</dbReference>
<dbReference type="Proteomes" id="UP000002427">
    <property type="component" value="Chromosome"/>
</dbReference>
<dbReference type="GO" id="GO:0004619">
    <property type="term" value="F:phosphoglycerate mutase activity"/>
    <property type="evidence" value="ECO:0007669"/>
    <property type="project" value="UniProtKB-EC"/>
</dbReference>
<dbReference type="GO" id="GO:0006094">
    <property type="term" value="P:gluconeogenesis"/>
    <property type="evidence" value="ECO:0007669"/>
    <property type="project" value="UniProtKB-UniRule"/>
</dbReference>
<dbReference type="GO" id="GO:0006096">
    <property type="term" value="P:glycolytic process"/>
    <property type="evidence" value="ECO:0007669"/>
    <property type="project" value="UniProtKB-UniRule"/>
</dbReference>
<dbReference type="CDD" id="cd07067">
    <property type="entry name" value="HP_PGM_like"/>
    <property type="match status" value="1"/>
</dbReference>
<dbReference type="FunFam" id="3.40.50.1240:FF:000003">
    <property type="entry name" value="2,3-bisphosphoglycerate-dependent phosphoglycerate mutase"/>
    <property type="match status" value="1"/>
</dbReference>
<dbReference type="Gene3D" id="3.40.50.1240">
    <property type="entry name" value="Phosphoglycerate mutase-like"/>
    <property type="match status" value="1"/>
</dbReference>
<dbReference type="HAMAP" id="MF_01039">
    <property type="entry name" value="PGAM_GpmA"/>
    <property type="match status" value="1"/>
</dbReference>
<dbReference type="InterPro" id="IPR013078">
    <property type="entry name" value="His_Pase_superF_clade-1"/>
</dbReference>
<dbReference type="InterPro" id="IPR029033">
    <property type="entry name" value="His_PPase_superfam"/>
</dbReference>
<dbReference type="InterPro" id="IPR001345">
    <property type="entry name" value="PG/BPGM_mutase_AS"/>
</dbReference>
<dbReference type="InterPro" id="IPR005952">
    <property type="entry name" value="Phosphogly_mut1"/>
</dbReference>
<dbReference type="NCBIfam" id="TIGR01258">
    <property type="entry name" value="pgm_1"/>
    <property type="match status" value="1"/>
</dbReference>
<dbReference type="NCBIfam" id="NF010713">
    <property type="entry name" value="PRK14115.1"/>
    <property type="match status" value="1"/>
</dbReference>
<dbReference type="PANTHER" id="PTHR11931">
    <property type="entry name" value="PHOSPHOGLYCERATE MUTASE"/>
    <property type="match status" value="1"/>
</dbReference>
<dbReference type="Pfam" id="PF00300">
    <property type="entry name" value="His_Phos_1"/>
    <property type="match status" value="1"/>
</dbReference>
<dbReference type="PIRSF" id="PIRSF000709">
    <property type="entry name" value="6PFK_2-Ptase"/>
    <property type="match status" value="1"/>
</dbReference>
<dbReference type="SMART" id="SM00855">
    <property type="entry name" value="PGAM"/>
    <property type="match status" value="1"/>
</dbReference>
<dbReference type="SUPFAM" id="SSF53254">
    <property type="entry name" value="Phosphoglycerate mutase-like"/>
    <property type="match status" value="1"/>
</dbReference>
<dbReference type="PROSITE" id="PS00175">
    <property type="entry name" value="PG_MUTASE"/>
    <property type="match status" value="1"/>
</dbReference>
<keyword id="KW-0312">Gluconeogenesis</keyword>
<keyword id="KW-0324">Glycolysis</keyword>
<keyword id="KW-0413">Isomerase</keyword>
<keyword id="KW-1185">Reference proteome</keyword>
<gene>
    <name evidence="1" type="primary">gpmA</name>
    <name type="ordered locus">BCI_0251</name>
</gene>
<evidence type="ECO:0000255" key="1">
    <source>
        <dbReference type="HAMAP-Rule" id="MF_01039"/>
    </source>
</evidence>
<proteinExistence type="inferred from homology"/>
<organism>
    <name type="scientific">Baumannia cicadellinicola subsp. Homalodisca coagulata</name>
    <dbReference type="NCBI Taxonomy" id="374463"/>
    <lineage>
        <taxon>Bacteria</taxon>
        <taxon>Pseudomonadati</taxon>
        <taxon>Pseudomonadota</taxon>
        <taxon>Gammaproteobacteria</taxon>
        <taxon>Candidatus Palibaumannia</taxon>
    </lineage>
</organism>
<protein>
    <recommendedName>
        <fullName evidence="1">2,3-bisphosphoglycerate-dependent phosphoglycerate mutase</fullName>
        <shortName evidence="1">BPG-dependent PGAM</shortName>
        <shortName evidence="1">PGAM</shortName>
        <shortName evidence="1">Phosphoglyceromutase</shortName>
        <shortName evidence="1">dPGM</shortName>
        <ecNumber evidence="1">5.4.2.11</ecNumber>
    </recommendedName>
</protein>